<feature type="chain" id="PRO_0000084922" description="Catalase">
    <location>
        <begin position="1"/>
        <end position="718"/>
    </location>
</feature>
<feature type="active site" evidence="3">
    <location>
        <position position="103"/>
    </location>
</feature>
<feature type="active site" evidence="3">
    <location>
        <position position="176"/>
    </location>
</feature>
<feature type="binding site" description="axial binding residue" evidence="1">
    <location>
        <position position="390"/>
    </location>
    <ligand>
        <name>heme</name>
        <dbReference type="ChEBI" id="CHEBI:30413"/>
    </ligand>
    <ligandPart>
        <name>Fe</name>
        <dbReference type="ChEBI" id="CHEBI:18248"/>
    </ligandPart>
</feature>
<reference key="1">
    <citation type="submission" date="2000-12" db="EMBL/GenBank/DDBJ databases">
        <title>Isolation and characterization of a Blumeria graminis catalase gene involved in antioxidant action in barley/powdery mildew interactions.</title>
        <authorList>
            <person name="Zhang Z."/>
            <person name="Gurr S.J."/>
        </authorList>
    </citation>
    <scope>NUCLEOTIDE SEQUENCE [GENOMIC DNA]</scope>
</reference>
<protein>
    <recommendedName>
        <fullName>Catalase</fullName>
        <ecNumber evidence="3">1.11.1.6</ecNumber>
    </recommendedName>
</protein>
<accession>Q8X1P0</accession>
<gene>
    <name type="primary">CAT1</name>
</gene>
<organism>
    <name type="scientific">Blumeria hordei</name>
    <name type="common">Barley powdery mildew</name>
    <name type="synonym">Blumeria graminis f. sp. hordei</name>
    <dbReference type="NCBI Taxonomy" id="2867405"/>
    <lineage>
        <taxon>Eukaryota</taxon>
        <taxon>Fungi</taxon>
        <taxon>Dikarya</taxon>
        <taxon>Ascomycota</taxon>
        <taxon>Pezizomycotina</taxon>
        <taxon>Leotiomycetes</taxon>
        <taxon>Erysiphales</taxon>
        <taxon>Erysiphaceae</taxon>
        <taxon>Blumeria</taxon>
    </lineage>
</organism>
<evidence type="ECO:0000250" key="1">
    <source>
        <dbReference type="UniProtKB" id="P04040"/>
    </source>
</evidence>
<evidence type="ECO:0000250" key="2">
    <source>
        <dbReference type="UniProtKB" id="P15202"/>
    </source>
</evidence>
<evidence type="ECO:0000255" key="3">
    <source>
        <dbReference type="PROSITE-ProRule" id="PRU10013"/>
    </source>
</evidence>
<evidence type="ECO:0000305" key="4"/>
<sequence length="718" mass="79011">MRLSLWNLLGLSGLVVASCPYMSGEDQEYHISHIQARGTDSEFLDQFKVEDSNSYLTTDAGGPIQDDASLKAGERGPTLLEDFIFRQKIQHFDHERVPERAVHARGAGAYGTFTSYADWTNITAASFLNSKGKETPVFVRFSTVAGSRGSADTVRDVHGFATRFYTDEGNFDIVGNNIPVFFIQDAILFPDLVHAVKPSPDSEIPQAATGHDSAWDFFSQQPSTLHTLFWAMSGHGIPRSYRHMDGFGVHTMRLVTDDGKSKLVKWHWKTKQGKASLVWEEAQILAGKNPDFHRQDLWDDINAGNGPEWELGVQIVDEEDVQAFGFDLLDPTKFLPEELVPVTILGKMKLTDNPTNYFAETEQVMFQPGHIVRGVDFSDDPLLQGRIYSYLDTQLNRNGGPNFEQLPVNRPRTKVHNNNRDGAGQMFIHTNKAPYSPNSLSGGNPKQANQTKGRGFFTAPSRKVVGSLHRGTASSFADVWSQPRMFYNSLIPSEQQFLVNAIRFEISQLKSDLIKKNTLMQLNRVSNDLATRVAAVIGYKPLDPSPEFYTNATTDYVTIFGKPLPSVVGFTVGILASTSSSTSISQAAQLATSFSSRGIRAVIVGESLLSGTDQTYSSADATAFDAVVVTMGAETLFGPVAKPNTLFPSGRPSQILHDAYRWGKPVGAVSKASVVLEPLPGTKNQGGVYRVESVNELATSIAKGLETFRFVDRFPLDS</sequence>
<name>CATA_BLUHO</name>
<proteinExistence type="inferred from homology"/>
<comment type="function">
    <text evidence="1">Catalyzes the degradation of hydrogen peroxide (H(2)O(2)) generated by peroxisomal oxidases to water and oxygen, thereby protecting cells from the toxic effects of hydrogen peroxide.</text>
</comment>
<comment type="catalytic activity">
    <reaction evidence="3">
        <text>2 H2O2 = O2 + 2 H2O</text>
        <dbReference type="Rhea" id="RHEA:20309"/>
        <dbReference type="ChEBI" id="CHEBI:15377"/>
        <dbReference type="ChEBI" id="CHEBI:15379"/>
        <dbReference type="ChEBI" id="CHEBI:16240"/>
        <dbReference type="EC" id="1.11.1.6"/>
    </reaction>
</comment>
<comment type="cofactor">
    <cofactor evidence="2">
        <name>heme</name>
        <dbReference type="ChEBI" id="CHEBI:30413"/>
    </cofactor>
</comment>
<comment type="subcellular location">
    <subcellularLocation>
        <location evidence="2">Peroxisome matrix</location>
    </subcellularLocation>
</comment>
<comment type="similarity">
    <text evidence="4">Belongs to the catalase family.</text>
</comment>
<keyword id="KW-0349">Heme</keyword>
<keyword id="KW-0376">Hydrogen peroxide</keyword>
<keyword id="KW-0408">Iron</keyword>
<keyword id="KW-0479">Metal-binding</keyword>
<keyword id="KW-0560">Oxidoreductase</keyword>
<keyword id="KW-0575">Peroxidase</keyword>
<keyword id="KW-0576">Peroxisome</keyword>
<dbReference type="EC" id="1.11.1.6" evidence="3"/>
<dbReference type="EMBL" id="AF327335">
    <property type="protein sequence ID" value="AAL56982.1"/>
    <property type="molecule type" value="Genomic_DNA"/>
</dbReference>
<dbReference type="SMR" id="Q8X1P0"/>
<dbReference type="VEuPathDB" id="FungiDB:BLGHR1_15927"/>
<dbReference type="GO" id="GO:0005829">
    <property type="term" value="C:cytosol"/>
    <property type="evidence" value="ECO:0007669"/>
    <property type="project" value="TreeGrafter"/>
</dbReference>
<dbReference type="GO" id="GO:0005782">
    <property type="term" value="C:peroxisomal matrix"/>
    <property type="evidence" value="ECO:0007669"/>
    <property type="project" value="UniProtKB-SubCell"/>
</dbReference>
<dbReference type="GO" id="GO:0004096">
    <property type="term" value="F:catalase activity"/>
    <property type="evidence" value="ECO:0007669"/>
    <property type="project" value="UniProtKB-EC"/>
</dbReference>
<dbReference type="GO" id="GO:0020037">
    <property type="term" value="F:heme binding"/>
    <property type="evidence" value="ECO:0007669"/>
    <property type="project" value="InterPro"/>
</dbReference>
<dbReference type="GO" id="GO:0046872">
    <property type="term" value="F:metal ion binding"/>
    <property type="evidence" value="ECO:0007669"/>
    <property type="project" value="UniProtKB-KW"/>
</dbReference>
<dbReference type="GO" id="GO:0042744">
    <property type="term" value="P:hydrogen peroxide catabolic process"/>
    <property type="evidence" value="ECO:0007669"/>
    <property type="project" value="UniProtKB-KW"/>
</dbReference>
<dbReference type="GO" id="GO:0006979">
    <property type="term" value="P:response to oxidative stress"/>
    <property type="evidence" value="ECO:0007669"/>
    <property type="project" value="InterPro"/>
</dbReference>
<dbReference type="CDD" id="cd03132">
    <property type="entry name" value="GATase1_catalase"/>
    <property type="match status" value="1"/>
</dbReference>
<dbReference type="FunFam" id="2.40.180.10:FF:000003">
    <property type="entry name" value="Catalase"/>
    <property type="match status" value="1"/>
</dbReference>
<dbReference type="Gene3D" id="1.20.1370.20">
    <property type="match status" value="1"/>
</dbReference>
<dbReference type="Gene3D" id="3.40.50.880">
    <property type="match status" value="1"/>
</dbReference>
<dbReference type="Gene3D" id="2.40.180.10">
    <property type="entry name" value="Catalase core domain"/>
    <property type="match status" value="1"/>
</dbReference>
<dbReference type="InterPro" id="IPR018028">
    <property type="entry name" value="Catalase"/>
</dbReference>
<dbReference type="InterPro" id="IPR024708">
    <property type="entry name" value="Catalase_AS"/>
</dbReference>
<dbReference type="InterPro" id="IPR024712">
    <property type="entry name" value="Catalase_clade2"/>
</dbReference>
<dbReference type="InterPro" id="IPR043156">
    <property type="entry name" value="Catalase_clade2_helical"/>
</dbReference>
<dbReference type="InterPro" id="IPR011614">
    <property type="entry name" value="Catalase_core"/>
</dbReference>
<dbReference type="InterPro" id="IPR010582">
    <property type="entry name" value="Catalase_immune_responsive"/>
</dbReference>
<dbReference type="InterPro" id="IPR041399">
    <property type="entry name" value="Catalase_large_C"/>
</dbReference>
<dbReference type="InterPro" id="IPR020835">
    <property type="entry name" value="Catalase_sf"/>
</dbReference>
<dbReference type="InterPro" id="IPR029062">
    <property type="entry name" value="Class_I_gatase-like"/>
</dbReference>
<dbReference type="PANTHER" id="PTHR42821">
    <property type="entry name" value="CATALASE"/>
    <property type="match status" value="1"/>
</dbReference>
<dbReference type="PANTHER" id="PTHR42821:SF3">
    <property type="entry name" value="CATALASE B"/>
    <property type="match status" value="1"/>
</dbReference>
<dbReference type="Pfam" id="PF00199">
    <property type="entry name" value="Catalase"/>
    <property type="match status" value="1"/>
</dbReference>
<dbReference type="Pfam" id="PF06628">
    <property type="entry name" value="Catalase-rel"/>
    <property type="match status" value="1"/>
</dbReference>
<dbReference type="Pfam" id="PF18011">
    <property type="entry name" value="Catalase_C"/>
    <property type="match status" value="1"/>
</dbReference>
<dbReference type="PIRSF" id="PIRSF038927">
    <property type="entry name" value="Catalase_clade2"/>
    <property type="match status" value="1"/>
</dbReference>
<dbReference type="PRINTS" id="PR00067">
    <property type="entry name" value="CATALASE"/>
</dbReference>
<dbReference type="SMART" id="SM01060">
    <property type="entry name" value="Catalase"/>
    <property type="match status" value="1"/>
</dbReference>
<dbReference type="SUPFAM" id="SSF56634">
    <property type="entry name" value="Heme-dependent catalase-like"/>
    <property type="match status" value="1"/>
</dbReference>
<dbReference type="PROSITE" id="PS00438">
    <property type="entry name" value="CATALASE_2"/>
    <property type="match status" value="1"/>
</dbReference>
<dbReference type="PROSITE" id="PS51402">
    <property type="entry name" value="CATALASE_3"/>
    <property type="match status" value="1"/>
</dbReference>